<comment type="function">
    <text evidence="1">One of several proteins that assist in the late maturation steps of the functional core of the 30S ribosomal subunit. Associates with free 30S ribosomal subunits (but not with 30S subunits that are part of 70S ribosomes or polysomes). Required for efficient processing of 16S rRNA. May interact with the 5'-terminal helix region of 16S rRNA.</text>
</comment>
<comment type="subunit">
    <text evidence="1">Monomer. Binds 30S ribosomal subunits, but not 50S ribosomal subunits or 70S ribosomes.</text>
</comment>
<comment type="subcellular location">
    <subcellularLocation>
        <location evidence="1">Cytoplasm</location>
    </subcellularLocation>
</comment>
<comment type="similarity">
    <text evidence="1">Belongs to the RbfA family.</text>
</comment>
<reference key="1">
    <citation type="journal article" date="2007" name="J. Bacteriol.">
        <title>Whole-genome analysis of the methyl tert-butyl ether-degrading beta-proteobacterium Methylibium petroleiphilum PM1.</title>
        <authorList>
            <person name="Kane S.R."/>
            <person name="Chakicherla A.Y."/>
            <person name="Chain P.S.G."/>
            <person name="Schmidt R."/>
            <person name="Shin M.W."/>
            <person name="Legler T.C."/>
            <person name="Scow K.M."/>
            <person name="Larimer F.W."/>
            <person name="Lucas S.M."/>
            <person name="Richardson P.M."/>
            <person name="Hristova K.R."/>
        </authorList>
    </citation>
    <scope>NUCLEOTIDE SEQUENCE [LARGE SCALE GENOMIC DNA]</scope>
    <source>
        <strain>ATCC BAA-1232 / LMG 22953 / PM1</strain>
    </source>
</reference>
<sequence length="130" mass="14355">MKHKRAIPNRGLRVADQIQRDVAGLIRELKDPRIGMVTIQAVEVTPDYAHAKVFFSVLIGDPAECAAALNEAAGYLRNSLFKRLQIHTVPTLHFQFDRTTERAADLNALIHQANATRAKDADDQPGATEA</sequence>
<evidence type="ECO:0000255" key="1">
    <source>
        <dbReference type="HAMAP-Rule" id="MF_00003"/>
    </source>
</evidence>
<proteinExistence type="inferred from homology"/>
<feature type="chain" id="PRO_1000000140" description="Ribosome-binding factor A">
    <location>
        <begin position="1"/>
        <end position="130"/>
    </location>
</feature>
<name>RBFA_METPP</name>
<dbReference type="EMBL" id="CP000555">
    <property type="protein sequence ID" value="ABM94878.1"/>
    <property type="molecule type" value="Genomic_DNA"/>
</dbReference>
<dbReference type="RefSeq" id="WP_011829515.1">
    <property type="nucleotide sequence ID" value="NC_008825.1"/>
</dbReference>
<dbReference type="SMR" id="A2SH39"/>
<dbReference type="STRING" id="420662.Mpe_A1920"/>
<dbReference type="KEGG" id="mpt:Mpe_A1920"/>
<dbReference type="eggNOG" id="COG0858">
    <property type="taxonomic scope" value="Bacteria"/>
</dbReference>
<dbReference type="HOGENOM" id="CLU_089475_5_1_4"/>
<dbReference type="Proteomes" id="UP000000366">
    <property type="component" value="Chromosome"/>
</dbReference>
<dbReference type="GO" id="GO:0005829">
    <property type="term" value="C:cytosol"/>
    <property type="evidence" value="ECO:0007669"/>
    <property type="project" value="TreeGrafter"/>
</dbReference>
<dbReference type="GO" id="GO:0043024">
    <property type="term" value="F:ribosomal small subunit binding"/>
    <property type="evidence" value="ECO:0007669"/>
    <property type="project" value="TreeGrafter"/>
</dbReference>
<dbReference type="GO" id="GO:0030490">
    <property type="term" value="P:maturation of SSU-rRNA"/>
    <property type="evidence" value="ECO:0007669"/>
    <property type="project" value="UniProtKB-UniRule"/>
</dbReference>
<dbReference type="Gene3D" id="3.30.300.20">
    <property type="match status" value="1"/>
</dbReference>
<dbReference type="HAMAP" id="MF_00003">
    <property type="entry name" value="RbfA"/>
    <property type="match status" value="1"/>
</dbReference>
<dbReference type="InterPro" id="IPR015946">
    <property type="entry name" value="KH_dom-like_a/b"/>
</dbReference>
<dbReference type="InterPro" id="IPR000238">
    <property type="entry name" value="RbfA"/>
</dbReference>
<dbReference type="InterPro" id="IPR023799">
    <property type="entry name" value="RbfA_dom_sf"/>
</dbReference>
<dbReference type="NCBIfam" id="TIGR00082">
    <property type="entry name" value="rbfA"/>
    <property type="match status" value="1"/>
</dbReference>
<dbReference type="PANTHER" id="PTHR33515">
    <property type="entry name" value="RIBOSOME-BINDING FACTOR A, CHLOROPLASTIC-RELATED"/>
    <property type="match status" value="1"/>
</dbReference>
<dbReference type="PANTHER" id="PTHR33515:SF1">
    <property type="entry name" value="RIBOSOME-BINDING FACTOR A, CHLOROPLASTIC-RELATED"/>
    <property type="match status" value="1"/>
</dbReference>
<dbReference type="Pfam" id="PF02033">
    <property type="entry name" value="RBFA"/>
    <property type="match status" value="1"/>
</dbReference>
<dbReference type="SUPFAM" id="SSF89919">
    <property type="entry name" value="Ribosome-binding factor A, RbfA"/>
    <property type="match status" value="1"/>
</dbReference>
<gene>
    <name evidence="1" type="primary">rbfA</name>
    <name type="ordered locus">Mpe_A1920</name>
</gene>
<protein>
    <recommendedName>
        <fullName evidence="1">Ribosome-binding factor A</fullName>
    </recommendedName>
</protein>
<accession>A2SH39</accession>
<keyword id="KW-0963">Cytoplasm</keyword>
<keyword id="KW-1185">Reference proteome</keyword>
<keyword id="KW-0690">Ribosome biogenesis</keyword>
<organism>
    <name type="scientific">Methylibium petroleiphilum (strain ATCC BAA-1232 / LMG 22953 / PM1)</name>
    <dbReference type="NCBI Taxonomy" id="420662"/>
    <lineage>
        <taxon>Bacteria</taxon>
        <taxon>Pseudomonadati</taxon>
        <taxon>Pseudomonadota</taxon>
        <taxon>Betaproteobacteria</taxon>
        <taxon>Burkholderiales</taxon>
        <taxon>Sphaerotilaceae</taxon>
        <taxon>Methylibium</taxon>
    </lineage>
</organism>